<proteinExistence type="evidence at protein level"/>
<reference key="1">
    <citation type="journal article" date="2000" name="Science">
        <title>The genome sequence of Drosophila melanogaster.</title>
        <authorList>
            <person name="Adams M.D."/>
            <person name="Celniker S.E."/>
            <person name="Holt R.A."/>
            <person name="Evans C.A."/>
            <person name="Gocayne J.D."/>
            <person name="Amanatides P.G."/>
            <person name="Scherer S.E."/>
            <person name="Li P.W."/>
            <person name="Hoskins R.A."/>
            <person name="Galle R.F."/>
            <person name="George R.A."/>
            <person name="Lewis S.E."/>
            <person name="Richards S."/>
            <person name="Ashburner M."/>
            <person name="Henderson S.N."/>
            <person name="Sutton G.G."/>
            <person name="Wortman J.R."/>
            <person name="Yandell M.D."/>
            <person name="Zhang Q."/>
            <person name="Chen L.X."/>
            <person name="Brandon R.C."/>
            <person name="Rogers Y.-H.C."/>
            <person name="Blazej R.G."/>
            <person name="Champe M."/>
            <person name="Pfeiffer B.D."/>
            <person name="Wan K.H."/>
            <person name="Doyle C."/>
            <person name="Baxter E.G."/>
            <person name="Helt G."/>
            <person name="Nelson C.R."/>
            <person name="Miklos G.L.G."/>
            <person name="Abril J.F."/>
            <person name="Agbayani A."/>
            <person name="An H.-J."/>
            <person name="Andrews-Pfannkoch C."/>
            <person name="Baldwin D."/>
            <person name="Ballew R.M."/>
            <person name="Basu A."/>
            <person name="Baxendale J."/>
            <person name="Bayraktaroglu L."/>
            <person name="Beasley E.M."/>
            <person name="Beeson K.Y."/>
            <person name="Benos P.V."/>
            <person name="Berman B.P."/>
            <person name="Bhandari D."/>
            <person name="Bolshakov S."/>
            <person name="Borkova D."/>
            <person name="Botchan M.R."/>
            <person name="Bouck J."/>
            <person name="Brokstein P."/>
            <person name="Brottier P."/>
            <person name="Burtis K.C."/>
            <person name="Busam D.A."/>
            <person name="Butler H."/>
            <person name="Cadieu E."/>
            <person name="Center A."/>
            <person name="Chandra I."/>
            <person name="Cherry J.M."/>
            <person name="Cawley S."/>
            <person name="Dahlke C."/>
            <person name="Davenport L.B."/>
            <person name="Davies P."/>
            <person name="de Pablos B."/>
            <person name="Delcher A."/>
            <person name="Deng Z."/>
            <person name="Mays A.D."/>
            <person name="Dew I."/>
            <person name="Dietz S.M."/>
            <person name="Dodson K."/>
            <person name="Doup L.E."/>
            <person name="Downes M."/>
            <person name="Dugan-Rocha S."/>
            <person name="Dunkov B.C."/>
            <person name="Dunn P."/>
            <person name="Durbin K.J."/>
            <person name="Evangelista C.C."/>
            <person name="Ferraz C."/>
            <person name="Ferriera S."/>
            <person name="Fleischmann W."/>
            <person name="Fosler C."/>
            <person name="Gabrielian A.E."/>
            <person name="Garg N.S."/>
            <person name="Gelbart W.M."/>
            <person name="Glasser K."/>
            <person name="Glodek A."/>
            <person name="Gong F."/>
            <person name="Gorrell J.H."/>
            <person name="Gu Z."/>
            <person name="Guan P."/>
            <person name="Harris M."/>
            <person name="Harris N.L."/>
            <person name="Harvey D.A."/>
            <person name="Heiman T.J."/>
            <person name="Hernandez J.R."/>
            <person name="Houck J."/>
            <person name="Hostin D."/>
            <person name="Houston K.A."/>
            <person name="Howland T.J."/>
            <person name="Wei M.-H."/>
            <person name="Ibegwam C."/>
            <person name="Jalali M."/>
            <person name="Kalush F."/>
            <person name="Karpen G.H."/>
            <person name="Ke Z."/>
            <person name="Kennison J.A."/>
            <person name="Ketchum K.A."/>
            <person name="Kimmel B.E."/>
            <person name="Kodira C.D."/>
            <person name="Kraft C.L."/>
            <person name="Kravitz S."/>
            <person name="Kulp D."/>
            <person name="Lai Z."/>
            <person name="Lasko P."/>
            <person name="Lei Y."/>
            <person name="Levitsky A.A."/>
            <person name="Li J.H."/>
            <person name="Li Z."/>
            <person name="Liang Y."/>
            <person name="Lin X."/>
            <person name="Liu X."/>
            <person name="Mattei B."/>
            <person name="McIntosh T.C."/>
            <person name="McLeod M.P."/>
            <person name="McPherson D."/>
            <person name="Merkulov G."/>
            <person name="Milshina N.V."/>
            <person name="Mobarry C."/>
            <person name="Morris J."/>
            <person name="Moshrefi A."/>
            <person name="Mount S.M."/>
            <person name="Moy M."/>
            <person name="Murphy B."/>
            <person name="Murphy L."/>
            <person name="Muzny D.M."/>
            <person name="Nelson D.L."/>
            <person name="Nelson D.R."/>
            <person name="Nelson K.A."/>
            <person name="Nixon K."/>
            <person name="Nusskern D.R."/>
            <person name="Pacleb J.M."/>
            <person name="Palazzolo M."/>
            <person name="Pittman G.S."/>
            <person name="Pan S."/>
            <person name="Pollard J."/>
            <person name="Puri V."/>
            <person name="Reese M.G."/>
            <person name="Reinert K."/>
            <person name="Remington K."/>
            <person name="Saunders R.D.C."/>
            <person name="Scheeler F."/>
            <person name="Shen H."/>
            <person name="Shue B.C."/>
            <person name="Siden-Kiamos I."/>
            <person name="Simpson M."/>
            <person name="Skupski M.P."/>
            <person name="Smith T.J."/>
            <person name="Spier E."/>
            <person name="Spradling A.C."/>
            <person name="Stapleton M."/>
            <person name="Strong R."/>
            <person name="Sun E."/>
            <person name="Svirskas R."/>
            <person name="Tector C."/>
            <person name="Turner R."/>
            <person name="Venter E."/>
            <person name="Wang A.H."/>
            <person name="Wang X."/>
            <person name="Wang Z.-Y."/>
            <person name="Wassarman D.A."/>
            <person name="Weinstock G.M."/>
            <person name="Weissenbach J."/>
            <person name="Williams S.M."/>
            <person name="Woodage T."/>
            <person name="Worley K.C."/>
            <person name="Wu D."/>
            <person name="Yang S."/>
            <person name="Yao Q.A."/>
            <person name="Ye J."/>
            <person name="Yeh R.-F."/>
            <person name="Zaveri J.S."/>
            <person name="Zhan M."/>
            <person name="Zhang G."/>
            <person name="Zhao Q."/>
            <person name="Zheng L."/>
            <person name="Zheng X.H."/>
            <person name="Zhong F.N."/>
            <person name="Zhong W."/>
            <person name="Zhou X."/>
            <person name="Zhu S.C."/>
            <person name="Zhu X."/>
            <person name="Smith H.O."/>
            <person name="Gibbs R.A."/>
            <person name="Myers E.W."/>
            <person name="Rubin G.M."/>
            <person name="Venter J.C."/>
        </authorList>
    </citation>
    <scope>NUCLEOTIDE SEQUENCE [LARGE SCALE GENOMIC DNA]</scope>
    <source>
        <strain>Berkeley</strain>
    </source>
</reference>
<reference key="2">
    <citation type="journal article" date="2002" name="Genome Biol.">
        <title>Annotation of the Drosophila melanogaster euchromatic genome: a systematic review.</title>
        <authorList>
            <person name="Misra S."/>
            <person name="Crosby M.A."/>
            <person name="Mungall C.J."/>
            <person name="Matthews B.B."/>
            <person name="Campbell K.S."/>
            <person name="Hradecky P."/>
            <person name="Huang Y."/>
            <person name="Kaminker J.S."/>
            <person name="Millburn G.H."/>
            <person name="Prochnik S.E."/>
            <person name="Smith C.D."/>
            <person name="Tupy J.L."/>
            <person name="Whitfield E.J."/>
            <person name="Bayraktaroglu L."/>
            <person name="Berman B.P."/>
            <person name="Bettencourt B.R."/>
            <person name="Celniker S.E."/>
            <person name="de Grey A.D.N.J."/>
            <person name="Drysdale R.A."/>
            <person name="Harris N.L."/>
            <person name="Richter J."/>
            <person name="Russo S."/>
            <person name="Schroeder A.J."/>
            <person name="Shu S.Q."/>
            <person name="Stapleton M."/>
            <person name="Yamada C."/>
            <person name="Ashburner M."/>
            <person name="Gelbart W.M."/>
            <person name="Rubin G.M."/>
            <person name="Lewis S.E."/>
        </authorList>
    </citation>
    <scope>GENOME REANNOTATION</scope>
    <source>
        <strain>Berkeley</strain>
    </source>
</reference>
<reference key="3">
    <citation type="submission" date="2003-03" db="EMBL/GenBank/DDBJ databases">
        <authorList>
            <person name="Stapleton M."/>
            <person name="Brokstein P."/>
            <person name="Hong L."/>
            <person name="Agbayani A."/>
            <person name="Carlson J.W."/>
            <person name="Champe M."/>
            <person name="Chavez C."/>
            <person name="Dorsett V."/>
            <person name="Dresnek D."/>
            <person name="Farfan D."/>
            <person name="Frise E."/>
            <person name="George R.A."/>
            <person name="Gonzalez M."/>
            <person name="Guarin H."/>
            <person name="Kronmiller B."/>
            <person name="Li P.W."/>
            <person name="Liao G."/>
            <person name="Miranda A."/>
            <person name="Mungall C.J."/>
            <person name="Nunoo J."/>
            <person name="Pacleb J.M."/>
            <person name="Paragas V."/>
            <person name="Park S."/>
            <person name="Patel S."/>
            <person name="Phouanenavong S."/>
            <person name="Wan K.H."/>
            <person name="Yu C."/>
            <person name="Lewis S.E."/>
            <person name="Rubin G.M."/>
            <person name="Celniker S.E."/>
        </authorList>
    </citation>
    <scope>NUCLEOTIDE SEQUENCE [LARGE SCALE MRNA]</scope>
    <source>
        <strain>Berkeley</strain>
        <tissue>Ovary</tissue>
    </source>
</reference>
<reference key="4">
    <citation type="journal article" date="2007" name="Am. J. Med. Genet. A">
        <title>Methylthioadenosine phosphorylase (MTAP) in hearing: gene disruption by chromosomal rearrangement in a hearing impaired individual and model organism analysis.</title>
        <authorList>
            <person name="Williamson R.E."/>
            <person name="Darrow K.N."/>
            <person name="Michaud S."/>
            <person name="Jacobs J.S."/>
            <person name="Jones M.C."/>
            <person name="Eberl D.F."/>
            <person name="Maas R.L."/>
            <person name="Liberman M.C."/>
            <person name="Morton C.C."/>
        </authorList>
    </citation>
    <scope>TISSUE SPECIFICITY</scope>
    <scope>DISRUPTION PHENOTYPE</scope>
</reference>
<gene>
    <name type="primary">Mtap</name>
    <name type="ORF">CG4802</name>
</gene>
<accession>Q9V813</accession>
<organism>
    <name type="scientific">Drosophila melanogaster</name>
    <name type="common">Fruit fly</name>
    <dbReference type="NCBI Taxonomy" id="7227"/>
    <lineage>
        <taxon>Eukaryota</taxon>
        <taxon>Metazoa</taxon>
        <taxon>Ecdysozoa</taxon>
        <taxon>Arthropoda</taxon>
        <taxon>Hexapoda</taxon>
        <taxon>Insecta</taxon>
        <taxon>Pterygota</taxon>
        <taxon>Neoptera</taxon>
        <taxon>Endopterygota</taxon>
        <taxon>Diptera</taxon>
        <taxon>Brachycera</taxon>
        <taxon>Muscomorpha</taxon>
        <taxon>Ephydroidea</taxon>
        <taxon>Drosophilidae</taxon>
        <taxon>Drosophila</taxon>
        <taxon>Sophophora</taxon>
    </lineage>
</organism>
<dbReference type="EC" id="2.4.2.28" evidence="1"/>
<dbReference type="EMBL" id="AE013599">
    <property type="protein sequence ID" value="AAF57869.1"/>
    <property type="molecule type" value="Genomic_DNA"/>
</dbReference>
<dbReference type="EMBL" id="BT004912">
    <property type="protein sequence ID" value="AAO49165.1"/>
    <property type="molecule type" value="mRNA"/>
</dbReference>
<dbReference type="RefSeq" id="NP_001286525.1">
    <property type="nucleotide sequence ID" value="NM_001299596.1"/>
</dbReference>
<dbReference type="RefSeq" id="NP_611208.1">
    <property type="nucleotide sequence ID" value="NM_137364.4"/>
</dbReference>
<dbReference type="SMR" id="Q9V813"/>
<dbReference type="BioGRID" id="62649">
    <property type="interactions" value="6"/>
</dbReference>
<dbReference type="DIP" id="DIP-20687N"/>
<dbReference type="FunCoup" id="Q9V813">
    <property type="interactions" value="1418"/>
</dbReference>
<dbReference type="IntAct" id="Q9V813">
    <property type="interactions" value="19"/>
</dbReference>
<dbReference type="STRING" id="7227.FBpp0303028"/>
<dbReference type="PaxDb" id="7227-FBpp0086072"/>
<dbReference type="DNASU" id="36955"/>
<dbReference type="EnsemblMetazoa" id="FBtr0086916">
    <property type="protein sequence ID" value="FBpp0086072"/>
    <property type="gene ID" value="FBgn0034215"/>
</dbReference>
<dbReference type="EnsemblMetazoa" id="FBtr0345803">
    <property type="protein sequence ID" value="FBpp0311789"/>
    <property type="gene ID" value="FBgn0034215"/>
</dbReference>
<dbReference type="GeneID" id="36955"/>
<dbReference type="KEGG" id="dme:Dmel_CG4802"/>
<dbReference type="UCSC" id="CG4802-RA">
    <property type="organism name" value="d. melanogaster"/>
</dbReference>
<dbReference type="AGR" id="FB:FBgn0034215"/>
<dbReference type="CTD" id="4507"/>
<dbReference type="FlyBase" id="FBgn0034215">
    <property type="gene designation" value="Mtap"/>
</dbReference>
<dbReference type="VEuPathDB" id="VectorBase:FBgn0034215"/>
<dbReference type="eggNOG" id="KOG3985">
    <property type="taxonomic scope" value="Eukaryota"/>
</dbReference>
<dbReference type="GeneTree" id="ENSGT00950000182991"/>
<dbReference type="HOGENOM" id="CLU_054456_0_0_1"/>
<dbReference type="InParanoid" id="Q9V813"/>
<dbReference type="OMA" id="ADPFCPE"/>
<dbReference type="OrthoDB" id="431409at2759"/>
<dbReference type="PhylomeDB" id="Q9V813"/>
<dbReference type="Reactome" id="R-DME-1237112">
    <property type="pathway name" value="Methionine salvage pathway"/>
</dbReference>
<dbReference type="UniPathway" id="UPA00904">
    <property type="reaction ID" value="UER00873"/>
</dbReference>
<dbReference type="BioGRID-ORCS" id="36955">
    <property type="hits" value="0 hits in 3 CRISPR screens"/>
</dbReference>
<dbReference type="GenomeRNAi" id="36955"/>
<dbReference type="PRO" id="PR:Q9V813"/>
<dbReference type="Proteomes" id="UP000000803">
    <property type="component" value="Chromosome 2R"/>
</dbReference>
<dbReference type="Bgee" id="FBgn0034215">
    <property type="expression patterns" value="Expressed in capitellum (Drosophila) and 115 other cell types or tissues"/>
</dbReference>
<dbReference type="ExpressionAtlas" id="Q9V813">
    <property type="expression patterns" value="baseline and differential"/>
</dbReference>
<dbReference type="GO" id="GO:0005829">
    <property type="term" value="C:cytosol"/>
    <property type="evidence" value="ECO:0000318"/>
    <property type="project" value="GO_Central"/>
</dbReference>
<dbReference type="GO" id="GO:0005634">
    <property type="term" value="C:nucleus"/>
    <property type="evidence" value="ECO:0007669"/>
    <property type="project" value="UniProtKB-SubCell"/>
</dbReference>
<dbReference type="GO" id="GO:0042802">
    <property type="term" value="F:identical protein binding"/>
    <property type="evidence" value="ECO:0000353"/>
    <property type="project" value="IntAct"/>
</dbReference>
<dbReference type="GO" id="GO:0017061">
    <property type="term" value="F:S-methyl-5-thioadenosine phosphorylase activity"/>
    <property type="evidence" value="ECO:0000318"/>
    <property type="project" value="GO_Central"/>
</dbReference>
<dbReference type="GO" id="GO:0019509">
    <property type="term" value="P:L-methionine salvage from methylthioadenosine"/>
    <property type="evidence" value="ECO:0000318"/>
    <property type="project" value="GO_Central"/>
</dbReference>
<dbReference type="GO" id="GO:0006166">
    <property type="term" value="P:purine ribonucleoside salvage"/>
    <property type="evidence" value="ECO:0007669"/>
    <property type="project" value="UniProtKB-KW"/>
</dbReference>
<dbReference type="CDD" id="cd09010">
    <property type="entry name" value="MTAP_SsMTAPII_like_MTIP"/>
    <property type="match status" value="1"/>
</dbReference>
<dbReference type="FunFam" id="3.40.50.1580:FF:000006">
    <property type="entry name" value="Purine nucleoside phosphorylase"/>
    <property type="match status" value="1"/>
</dbReference>
<dbReference type="Gene3D" id="3.40.50.1580">
    <property type="entry name" value="Nucleoside phosphorylase domain"/>
    <property type="match status" value="1"/>
</dbReference>
<dbReference type="HAMAP" id="MF_01963">
    <property type="entry name" value="MTAP"/>
    <property type="match status" value="1"/>
</dbReference>
<dbReference type="InterPro" id="IPR010044">
    <property type="entry name" value="MTAP"/>
</dbReference>
<dbReference type="InterPro" id="IPR000845">
    <property type="entry name" value="Nucleoside_phosphorylase_d"/>
</dbReference>
<dbReference type="InterPro" id="IPR035994">
    <property type="entry name" value="Nucleoside_phosphorylase_sf"/>
</dbReference>
<dbReference type="InterPro" id="IPR018099">
    <property type="entry name" value="Purine_phosphorylase-2_CS"/>
</dbReference>
<dbReference type="NCBIfam" id="TIGR01694">
    <property type="entry name" value="MTAP"/>
    <property type="match status" value="1"/>
</dbReference>
<dbReference type="PANTHER" id="PTHR42679">
    <property type="entry name" value="S-METHYL-5'-THIOADENOSINE PHOSPHORYLASE"/>
    <property type="match status" value="1"/>
</dbReference>
<dbReference type="PANTHER" id="PTHR42679:SF2">
    <property type="entry name" value="S-METHYL-5'-THIOADENOSINE PHOSPHORYLASE"/>
    <property type="match status" value="1"/>
</dbReference>
<dbReference type="Pfam" id="PF01048">
    <property type="entry name" value="PNP_UDP_1"/>
    <property type="match status" value="1"/>
</dbReference>
<dbReference type="SUPFAM" id="SSF53167">
    <property type="entry name" value="Purine and uridine phosphorylases"/>
    <property type="match status" value="1"/>
</dbReference>
<dbReference type="PROSITE" id="PS01240">
    <property type="entry name" value="PNP_MTAP_2"/>
    <property type="match status" value="1"/>
</dbReference>
<sequence>MITIKCKDTNLDPLPVKIGIIGGSGLDDPDILEQRQERVVETPYGEPSDALIEGEINGVQCVLLARHGRKHDIMPSNVNYRANIWALRDVGCTHLIVSTACGSLREEIKPGNLVVPHDFIDRTTKRLQTFYDGKAQSPRGVCHLPMFPAFSERTRNILLQAAKELEIPAHDKATIVTIEGPRFSSRSESHMFRQWGGDLINMTTCPEVVLAKEAGLLYGSVAIATDYDCWRMGCEGVNVQDVLRTFAENVIKVKKILVNAVGRIAKEDWSEDILNAKQCVCNNTMSGAM</sequence>
<evidence type="ECO:0000255" key="1">
    <source>
        <dbReference type="HAMAP-Rule" id="MF_03155"/>
    </source>
</evidence>
<evidence type="ECO:0000269" key="2">
    <source>
    </source>
</evidence>
<keyword id="KW-0963">Cytoplasm</keyword>
<keyword id="KW-0328">Glycosyltransferase</keyword>
<keyword id="KW-0539">Nucleus</keyword>
<keyword id="KW-0660">Purine salvage</keyword>
<keyword id="KW-1185">Reference proteome</keyword>
<keyword id="KW-0808">Transferase</keyword>
<feature type="chain" id="PRO_0000184548" description="S-methyl-5'-thioadenosine phosphorylase">
    <location>
        <begin position="1"/>
        <end position="289"/>
    </location>
</feature>
<feature type="binding site" evidence="1">
    <location>
        <position position="24"/>
    </location>
    <ligand>
        <name>phosphate</name>
        <dbReference type="ChEBI" id="CHEBI:43474"/>
    </ligand>
</feature>
<feature type="binding site" evidence="1">
    <location>
        <begin position="66"/>
        <end position="67"/>
    </location>
    <ligand>
        <name>phosphate</name>
        <dbReference type="ChEBI" id="CHEBI:43474"/>
    </ligand>
</feature>
<feature type="binding site" evidence="1">
    <location>
        <begin position="99"/>
        <end position="100"/>
    </location>
    <ligand>
        <name>phosphate</name>
        <dbReference type="ChEBI" id="CHEBI:43474"/>
    </ligand>
</feature>
<feature type="binding site" evidence="1">
    <location>
        <position position="202"/>
    </location>
    <ligand>
        <name>substrate</name>
    </ligand>
</feature>
<feature type="binding site" evidence="1">
    <location>
        <position position="203"/>
    </location>
    <ligand>
        <name>phosphate</name>
        <dbReference type="ChEBI" id="CHEBI:43474"/>
    </ligand>
</feature>
<feature type="binding site" evidence="1">
    <location>
        <begin position="226"/>
        <end position="228"/>
    </location>
    <ligand>
        <name>substrate</name>
    </ligand>
</feature>
<feature type="site" description="Important for substrate specificity" evidence="1">
    <location>
        <position position="184"/>
    </location>
</feature>
<feature type="site" description="Important for substrate specificity" evidence="1">
    <location>
        <position position="239"/>
    </location>
</feature>
<protein>
    <recommendedName>
        <fullName evidence="1">S-methyl-5'-thioadenosine phosphorylase</fullName>
        <ecNumber evidence="1">2.4.2.28</ecNumber>
    </recommendedName>
    <alternativeName>
        <fullName evidence="1">5'-methylthioadenosine phosphorylase</fullName>
        <shortName evidence="1">MTA phosphorylase</shortName>
        <shortName evidence="1">MTAP</shortName>
        <shortName evidence="1">MTAPase</shortName>
    </alternativeName>
</protein>
<name>MTAP_DROME</name>
<comment type="function">
    <text evidence="1">Catalyzes the reversible phosphorylation of S-methyl-5'-thioadenosine (MTA) to adenine and 5-methylthioribose-1-phosphate. Involved in the breakdown of MTA, a major by-product of polyamine biosynthesis. Responsible for the first step in the methionine salvage pathway after MTA has been generated from S-adenosylmethionine. Has broad substrate specificity with 6-aminopurine nucleosides as preferred substrates.</text>
</comment>
<comment type="catalytic activity">
    <reaction evidence="1">
        <text>S-methyl-5'-thioadenosine + phosphate = 5-(methylsulfanyl)-alpha-D-ribose 1-phosphate + adenine</text>
        <dbReference type="Rhea" id="RHEA:11852"/>
        <dbReference type="ChEBI" id="CHEBI:16708"/>
        <dbReference type="ChEBI" id="CHEBI:17509"/>
        <dbReference type="ChEBI" id="CHEBI:43474"/>
        <dbReference type="ChEBI" id="CHEBI:58533"/>
        <dbReference type="EC" id="2.4.2.28"/>
    </reaction>
</comment>
<comment type="pathway">
    <text evidence="1">Amino-acid biosynthesis; L-methionine biosynthesis via salvage pathway; S-methyl-5-thio-alpha-D-ribose 1-phosphate from S-methyl-5'-thioadenosine (phosphorylase route): step 1/1.</text>
</comment>
<comment type="subunit">
    <text evidence="1">Homotrimer.</text>
</comment>
<comment type="interaction">
    <interactant intactId="EBI-124076">
        <id>Q9V813</id>
    </interactant>
    <interactant intactId="EBI-124076">
        <id>Q9V813</id>
        <label>Mtap</label>
    </interactant>
    <organismsDiffer>false</organismsDiffer>
    <experiments>4</experiments>
</comment>
<comment type="subcellular location">
    <subcellularLocation>
        <location evidence="1">Cytoplasm</location>
    </subcellularLocation>
    <subcellularLocation>
        <location evidence="1">Nucleus</location>
    </subcellularLocation>
</comment>
<comment type="tissue specificity">
    <text evidence="2">In embryos, expressed in the fat body and visceral mesoderm.</text>
</comment>
<comment type="disruption phenotype">
    <text evidence="2">No visible auditory phenotype.</text>
</comment>
<comment type="similarity">
    <text evidence="1">Belongs to the PNP/MTAP phosphorylase family. MTAP subfamily.</text>
</comment>